<organism>
    <name type="scientific">Streptococcus thermophilus (strain ATCC BAA-250 / LMG 18311)</name>
    <dbReference type="NCBI Taxonomy" id="264199"/>
    <lineage>
        <taxon>Bacteria</taxon>
        <taxon>Bacillati</taxon>
        <taxon>Bacillota</taxon>
        <taxon>Bacilli</taxon>
        <taxon>Lactobacillales</taxon>
        <taxon>Streptococcaceae</taxon>
        <taxon>Streptococcus</taxon>
    </lineage>
</organism>
<gene>
    <name type="ordered locus">stu0664</name>
</gene>
<dbReference type="EMBL" id="CP000023">
    <property type="protein sequence ID" value="AAV60369.1"/>
    <property type="molecule type" value="Genomic_DNA"/>
</dbReference>
<dbReference type="RefSeq" id="WP_002946099.1">
    <property type="nucleotide sequence ID" value="NC_006448.1"/>
</dbReference>
<dbReference type="SMR" id="Q5M535"/>
<dbReference type="STRING" id="264199.stu0664"/>
<dbReference type="KEGG" id="stl:stu0664"/>
<dbReference type="eggNOG" id="COG3091">
    <property type="taxonomic scope" value="Bacteria"/>
</dbReference>
<dbReference type="HOGENOM" id="CLU_123820_0_0_9"/>
<dbReference type="Proteomes" id="UP000001170">
    <property type="component" value="Chromosome"/>
</dbReference>
<dbReference type="GO" id="GO:0005737">
    <property type="term" value="C:cytoplasm"/>
    <property type="evidence" value="ECO:0007669"/>
    <property type="project" value="UniProtKB-SubCell"/>
</dbReference>
<dbReference type="GO" id="GO:0008270">
    <property type="term" value="F:zinc ion binding"/>
    <property type="evidence" value="ECO:0007669"/>
    <property type="project" value="UniProtKB-UniRule"/>
</dbReference>
<dbReference type="GO" id="GO:0006950">
    <property type="term" value="P:response to stress"/>
    <property type="evidence" value="ECO:0007669"/>
    <property type="project" value="UniProtKB-ARBA"/>
</dbReference>
<dbReference type="HAMAP" id="MF_00745">
    <property type="entry name" value="SprT_like"/>
    <property type="match status" value="1"/>
</dbReference>
<dbReference type="InterPro" id="IPR006640">
    <property type="entry name" value="SprT-like_domain"/>
</dbReference>
<dbReference type="InterPro" id="IPR035240">
    <property type="entry name" value="SprT_Zn_ribbon"/>
</dbReference>
<dbReference type="InterPro" id="IPR023524">
    <property type="entry name" value="Uncharacterised_SprT-like"/>
</dbReference>
<dbReference type="NCBIfam" id="NF003339">
    <property type="entry name" value="PRK04351.1"/>
    <property type="match status" value="1"/>
</dbReference>
<dbReference type="Pfam" id="PF10263">
    <property type="entry name" value="SprT-like"/>
    <property type="match status" value="1"/>
</dbReference>
<dbReference type="Pfam" id="PF17283">
    <property type="entry name" value="Zn_ribbon_SprT"/>
    <property type="match status" value="1"/>
</dbReference>
<dbReference type="SMART" id="SM00731">
    <property type="entry name" value="SprT"/>
    <property type="match status" value="1"/>
</dbReference>
<evidence type="ECO:0000255" key="1">
    <source>
        <dbReference type="HAMAP-Rule" id="MF_00745"/>
    </source>
</evidence>
<keyword id="KW-0963">Cytoplasm</keyword>
<keyword id="KW-0479">Metal-binding</keyword>
<keyword id="KW-1185">Reference proteome</keyword>
<keyword id="KW-0862">Zinc</keyword>
<feature type="chain" id="PRO_1000046523" description="Protein SprT-like">
    <location>
        <begin position="1"/>
        <end position="146"/>
    </location>
</feature>
<feature type="domain" description="SprT-like" evidence="1">
    <location>
        <begin position="6"/>
        <end position="141"/>
    </location>
</feature>
<feature type="active site" evidence="1">
    <location>
        <position position="65"/>
    </location>
</feature>
<feature type="binding site" evidence="1">
    <location>
        <position position="64"/>
    </location>
    <ligand>
        <name>Zn(2+)</name>
        <dbReference type="ChEBI" id="CHEBI:29105"/>
    </ligand>
</feature>
<feature type="binding site" evidence="1">
    <location>
        <position position="68"/>
    </location>
    <ligand>
        <name>Zn(2+)</name>
        <dbReference type="ChEBI" id="CHEBI:29105"/>
    </ligand>
</feature>
<reference key="1">
    <citation type="journal article" date="2004" name="Nat. Biotechnol.">
        <title>Complete sequence and comparative genome analysis of the dairy bacterium Streptococcus thermophilus.</title>
        <authorList>
            <person name="Bolotin A."/>
            <person name="Quinquis B."/>
            <person name="Renault P."/>
            <person name="Sorokin A."/>
            <person name="Ehrlich S.D."/>
            <person name="Kulakauskas S."/>
            <person name="Lapidus A."/>
            <person name="Goltsman E."/>
            <person name="Mazur M."/>
            <person name="Pusch G.D."/>
            <person name="Fonstein M."/>
            <person name="Overbeek R."/>
            <person name="Kyprides N."/>
            <person name="Purnelle B."/>
            <person name="Prozzi D."/>
            <person name="Ngui K."/>
            <person name="Masuy D."/>
            <person name="Hancy F."/>
            <person name="Burteau S."/>
            <person name="Boutry M."/>
            <person name="Delcour J."/>
            <person name="Goffeau A."/>
            <person name="Hols P."/>
        </authorList>
    </citation>
    <scope>NUCLEOTIDE SEQUENCE [LARGE SCALE GENOMIC DNA]</scope>
    <source>
        <strain>ATCC BAA-250 / LMG 18311</strain>
    </source>
</reference>
<sequence>MNLTDYVKTVSIEDFGWKFKHQALWNKRLRTTGGRFFPKDGHLDFNPKLYEEHGLETFRKIVRHELCHYHLYFQGKGCKHGDRDFKDLLARVDGLRYAPKMRNQAENYFLYQCQSCGHTYRRKRRVNTQKFGCGLCQGKLIFLNQS</sequence>
<accession>Q5M535</accession>
<comment type="cofactor">
    <cofactor evidence="1">
        <name>Zn(2+)</name>
        <dbReference type="ChEBI" id="CHEBI:29105"/>
    </cofactor>
    <text evidence="1">Binds 1 zinc ion.</text>
</comment>
<comment type="subcellular location">
    <subcellularLocation>
        <location evidence="1">Cytoplasm</location>
    </subcellularLocation>
</comment>
<comment type="similarity">
    <text evidence="1">Belongs to the SprT family.</text>
</comment>
<proteinExistence type="inferred from homology"/>
<name>SPRTL_STRT2</name>
<protein>
    <recommendedName>
        <fullName evidence="1">Protein SprT-like</fullName>
    </recommendedName>
</protein>